<dbReference type="EC" id="2.5.1.7" evidence="1"/>
<dbReference type="EMBL" id="BX897699">
    <property type="protein sequence ID" value="CAF28207.1"/>
    <property type="molecule type" value="Genomic_DNA"/>
</dbReference>
<dbReference type="RefSeq" id="WP_011181216.1">
    <property type="nucleotide sequence ID" value="NZ_LRIJ02000001.1"/>
</dbReference>
<dbReference type="SMR" id="Q6G226"/>
<dbReference type="PaxDb" id="283166-BH14420"/>
<dbReference type="EnsemblBacteria" id="CAF28207">
    <property type="protein sequence ID" value="CAF28207"/>
    <property type="gene ID" value="BH14420"/>
</dbReference>
<dbReference type="GeneID" id="92986050"/>
<dbReference type="KEGG" id="bhe:BH14420"/>
<dbReference type="eggNOG" id="COG0766">
    <property type="taxonomic scope" value="Bacteria"/>
</dbReference>
<dbReference type="OrthoDB" id="9803760at2"/>
<dbReference type="UniPathway" id="UPA00219"/>
<dbReference type="Proteomes" id="UP000000421">
    <property type="component" value="Chromosome"/>
</dbReference>
<dbReference type="GO" id="GO:0005737">
    <property type="term" value="C:cytoplasm"/>
    <property type="evidence" value="ECO:0007669"/>
    <property type="project" value="UniProtKB-SubCell"/>
</dbReference>
<dbReference type="GO" id="GO:0008760">
    <property type="term" value="F:UDP-N-acetylglucosamine 1-carboxyvinyltransferase activity"/>
    <property type="evidence" value="ECO:0007669"/>
    <property type="project" value="UniProtKB-UniRule"/>
</dbReference>
<dbReference type="GO" id="GO:0051301">
    <property type="term" value="P:cell division"/>
    <property type="evidence" value="ECO:0007669"/>
    <property type="project" value="UniProtKB-KW"/>
</dbReference>
<dbReference type="GO" id="GO:0071555">
    <property type="term" value="P:cell wall organization"/>
    <property type="evidence" value="ECO:0007669"/>
    <property type="project" value="UniProtKB-KW"/>
</dbReference>
<dbReference type="GO" id="GO:0009252">
    <property type="term" value="P:peptidoglycan biosynthetic process"/>
    <property type="evidence" value="ECO:0007669"/>
    <property type="project" value="UniProtKB-UniRule"/>
</dbReference>
<dbReference type="GO" id="GO:0008360">
    <property type="term" value="P:regulation of cell shape"/>
    <property type="evidence" value="ECO:0007669"/>
    <property type="project" value="UniProtKB-KW"/>
</dbReference>
<dbReference type="GO" id="GO:0019277">
    <property type="term" value="P:UDP-N-acetylgalactosamine biosynthetic process"/>
    <property type="evidence" value="ECO:0007669"/>
    <property type="project" value="InterPro"/>
</dbReference>
<dbReference type="CDD" id="cd01555">
    <property type="entry name" value="UdpNAET"/>
    <property type="match status" value="1"/>
</dbReference>
<dbReference type="FunFam" id="3.65.10.10:FF:000001">
    <property type="entry name" value="UDP-N-acetylglucosamine 1-carboxyvinyltransferase"/>
    <property type="match status" value="1"/>
</dbReference>
<dbReference type="Gene3D" id="3.65.10.10">
    <property type="entry name" value="Enolpyruvate transferase domain"/>
    <property type="match status" value="2"/>
</dbReference>
<dbReference type="HAMAP" id="MF_00111">
    <property type="entry name" value="MurA"/>
    <property type="match status" value="1"/>
</dbReference>
<dbReference type="InterPro" id="IPR001986">
    <property type="entry name" value="Enolpyruvate_Tfrase_dom"/>
</dbReference>
<dbReference type="InterPro" id="IPR036968">
    <property type="entry name" value="Enolpyruvate_Tfrase_sf"/>
</dbReference>
<dbReference type="InterPro" id="IPR050068">
    <property type="entry name" value="MurA_subfamily"/>
</dbReference>
<dbReference type="InterPro" id="IPR013792">
    <property type="entry name" value="RNA3'P_cycl/enolpyr_Trfase_a/b"/>
</dbReference>
<dbReference type="InterPro" id="IPR005750">
    <property type="entry name" value="UDP_GlcNAc_COvinyl_MurA"/>
</dbReference>
<dbReference type="NCBIfam" id="TIGR01072">
    <property type="entry name" value="murA"/>
    <property type="match status" value="1"/>
</dbReference>
<dbReference type="NCBIfam" id="NF006873">
    <property type="entry name" value="PRK09369.1"/>
    <property type="match status" value="1"/>
</dbReference>
<dbReference type="PANTHER" id="PTHR43783">
    <property type="entry name" value="UDP-N-ACETYLGLUCOSAMINE 1-CARBOXYVINYLTRANSFERASE"/>
    <property type="match status" value="1"/>
</dbReference>
<dbReference type="PANTHER" id="PTHR43783:SF1">
    <property type="entry name" value="UDP-N-ACETYLGLUCOSAMINE 1-CARBOXYVINYLTRANSFERASE"/>
    <property type="match status" value="1"/>
</dbReference>
<dbReference type="Pfam" id="PF00275">
    <property type="entry name" value="EPSP_synthase"/>
    <property type="match status" value="1"/>
</dbReference>
<dbReference type="SUPFAM" id="SSF55205">
    <property type="entry name" value="EPT/RTPC-like"/>
    <property type="match status" value="1"/>
</dbReference>
<keyword id="KW-0131">Cell cycle</keyword>
<keyword id="KW-0132">Cell division</keyword>
<keyword id="KW-0133">Cell shape</keyword>
<keyword id="KW-0961">Cell wall biogenesis/degradation</keyword>
<keyword id="KW-0963">Cytoplasm</keyword>
<keyword id="KW-0573">Peptidoglycan synthesis</keyword>
<keyword id="KW-0670">Pyruvate</keyword>
<keyword id="KW-0808">Transferase</keyword>
<feature type="chain" id="PRO_0000231169" description="UDP-N-acetylglucosamine 1-carboxyvinyltransferase">
    <location>
        <begin position="1"/>
        <end position="431"/>
    </location>
</feature>
<feature type="active site" description="Proton donor" evidence="1">
    <location>
        <position position="126"/>
    </location>
</feature>
<feature type="binding site" evidence="1">
    <location>
        <begin position="22"/>
        <end position="23"/>
    </location>
    <ligand>
        <name>phosphoenolpyruvate</name>
        <dbReference type="ChEBI" id="CHEBI:58702"/>
    </ligand>
</feature>
<feature type="binding site" evidence="1">
    <location>
        <position position="102"/>
    </location>
    <ligand>
        <name>UDP-N-acetyl-alpha-D-glucosamine</name>
        <dbReference type="ChEBI" id="CHEBI:57705"/>
    </ligand>
</feature>
<feature type="binding site" evidence="1">
    <location>
        <position position="318"/>
    </location>
    <ligand>
        <name>UDP-N-acetyl-alpha-D-glucosamine</name>
        <dbReference type="ChEBI" id="CHEBI:57705"/>
    </ligand>
</feature>
<feature type="binding site" evidence="1">
    <location>
        <position position="340"/>
    </location>
    <ligand>
        <name>UDP-N-acetyl-alpha-D-glucosamine</name>
        <dbReference type="ChEBI" id="CHEBI:57705"/>
    </ligand>
</feature>
<feature type="modified residue" description="2-(S-cysteinyl)pyruvic acid O-phosphothioketal" evidence="1">
    <location>
        <position position="126"/>
    </location>
</feature>
<gene>
    <name evidence="1" type="primary">murA</name>
    <name type="ordered locus">BH14420</name>
</gene>
<reference key="1">
    <citation type="journal article" date="2004" name="Proc. Natl. Acad. Sci. U.S.A.">
        <title>The louse-borne human pathogen Bartonella quintana is a genomic derivative of the zoonotic agent Bartonella henselae.</title>
        <authorList>
            <person name="Alsmark U.C.M."/>
            <person name="Frank A.C."/>
            <person name="Karlberg E.O."/>
            <person name="Legault B.-A."/>
            <person name="Ardell D.H."/>
            <person name="Canbaeck B."/>
            <person name="Eriksson A.-S."/>
            <person name="Naeslund A.K."/>
            <person name="Handley S.A."/>
            <person name="Huvet M."/>
            <person name="La Scola B."/>
            <person name="Holmberg M."/>
            <person name="Andersson S.G.E."/>
        </authorList>
    </citation>
    <scope>NUCLEOTIDE SEQUENCE [LARGE SCALE GENOMIC DNA]</scope>
    <source>
        <strain>ATCC 49882 / DSM 28221 / CCUG 30454 / Houston 1</strain>
    </source>
</reference>
<organism>
    <name type="scientific">Bartonella henselae (strain ATCC 49882 / DSM 28221 / CCUG 30454 / Houston 1)</name>
    <name type="common">Rochalimaea henselae</name>
    <dbReference type="NCBI Taxonomy" id="283166"/>
    <lineage>
        <taxon>Bacteria</taxon>
        <taxon>Pseudomonadati</taxon>
        <taxon>Pseudomonadota</taxon>
        <taxon>Alphaproteobacteria</taxon>
        <taxon>Hyphomicrobiales</taxon>
        <taxon>Bartonellaceae</taxon>
        <taxon>Bartonella</taxon>
    </lineage>
</organism>
<protein>
    <recommendedName>
        <fullName evidence="1">UDP-N-acetylglucosamine 1-carboxyvinyltransferase</fullName>
        <ecNumber evidence="1">2.5.1.7</ecNumber>
    </recommendedName>
    <alternativeName>
        <fullName evidence="1">Enoylpyruvate transferase</fullName>
    </alternativeName>
    <alternativeName>
        <fullName evidence="1">UDP-N-acetylglucosamine enolpyruvyl transferase</fullName>
        <shortName evidence="1">EPT</shortName>
    </alternativeName>
</protein>
<sequence>MDSIEIVGGKKLKGIIPISGAKNAALPLMIAALLTEETLSLDNIPHLADIELLIRILNNHGVGYAVDGQKNHTECVHSRTIHFTAQKITTTYAPYDLVRKMRASFWVIGPLLARCREAYVSLPGGCAIGTRPVDFILEGLKTLGARITIENGYVHAKVPKGLKGAHYRFPKVTVGGTHVMIMAAVTANGKTVLENAACEPEVTNLVQALNAMGAKITGEGTTILTIEGVQKLNGARISVIPDRIEAGTYAMAVAMTGGDVMLKNANPHHLTQVLEILQKTGLDIEIKPQGIHLKRNLRQTKIMPVDIKTGPYPAFPTDLQAQFMALMTRAQGISHITETIFENRFMHVQELNRLGAQIKLDGQTATVFGTEHLQGAPVMATDLRASVSLVIAALAAKGKTTVNRVYHLDRGFERLEEKLARCGATIQRITV</sequence>
<proteinExistence type="inferred from homology"/>
<name>MURA_BARHE</name>
<accession>Q6G226</accession>
<comment type="function">
    <text evidence="1">Cell wall formation. Adds enolpyruvyl to UDP-N-acetylglucosamine.</text>
</comment>
<comment type="catalytic activity">
    <reaction evidence="1">
        <text>phosphoenolpyruvate + UDP-N-acetyl-alpha-D-glucosamine = UDP-N-acetyl-3-O-(1-carboxyvinyl)-alpha-D-glucosamine + phosphate</text>
        <dbReference type="Rhea" id="RHEA:18681"/>
        <dbReference type="ChEBI" id="CHEBI:43474"/>
        <dbReference type="ChEBI" id="CHEBI:57705"/>
        <dbReference type="ChEBI" id="CHEBI:58702"/>
        <dbReference type="ChEBI" id="CHEBI:68483"/>
        <dbReference type="EC" id="2.5.1.7"/>
    </reaction>
</comment>
<comment type="pathway">
    <text evidence="1">Cell wall biogenesis; peptidoglycan biosynthesis.</text>
</comment>
<comment type="subcellular location">
    <subcellularLocation>
        <location evidence="1">Cytoplasm</location>
    </subcellularLocation>
</comment>
<comment type="similarity">
    <text evidence="1">Belongs to the EPSP synthase family. MurA subfamily.</text>
</comment>
<evidence type="ECO:0000255" key="1">
    <source>
        <dbReference type="HAMAP-Rule" id="MF_00111"/>
    </source>
</evidence>